<comment type="function">
    <text evidence="1">This protein is an auxiliary protein of DNA polymerase delta and is involved in the control of eukaryotic DNA replication by increasing the polymerase's processibility during elongation of the leading strand.</text>
</comment>
<comment type="subunit">
    <text evidence="1 2">Homotrimer. Forms a complex with activator 1 heteropentamer in the presence of ATP (By similarity). Component of the replisome complex (By similarity).</text>
</comment>
<comment type="subcellular location">
    <subcellularLocation>
        <location evidence="2">Nucleus</location>
    </subcellularLocation>
</comment>
<comment type="PTM">
    <text evidence="1">Monoubiquitinated by the UBE2B-RAD18 complex on Lys-164. Monoubiquitination at Lys-164 also takes place in undamaged proliferating cells, and is mediated by the DCX(DTL) complex, leading to enhance PCNA-dependent translesion DNA synthesis (By similarity).</text>
</comment>
<comment type="similarity">
    <text evidence="4">Belongs to the PCNA family.</text>
</comment>
<gene>
    <name type="primary">PCNA</name>
</gene>
<proteinExistence type="evidence at transcript level"/>
<name>PCNA_COTJA</name>
<feature type="chain" id="PRO_0000149162" description="Proliferating cell nuclear antigen">
    <location>
        <begin position="1"/>
        <end position="262"/>
    </location>
</feature>
<feature type="DNA-binding region" evidence="3">
    <location>
        <begin position="61"/>
        <end position="80"/>
    </location>
</feature>
<feature type="cross-link" description="Glycyl lysine isopeptide (Lys-Gly) (interchain with G-Cter in ubiquitin)" evidence="1">
    <location>
        <position position="164"/>
    </location>
</feature>
<reference key="1">
    <citation type="submission" date="2000-11" db="EMBL/GenBank/DDBJ databases">
        <title>BMP-2 induces cDermo-1 expression and ectopic feather development.</title>
        <authorList>
            <person name="Scaal M."/>
            <person name="Prols F."/>
            <person name="Fuechtbauer E.M."/>
            <person name="Christ B."/>
            <person name="Brand-Saberi B."/>
        </authorList>
    </citation>
    <scope>NUCLEOTIDE SEQUENCE [MRNA]</scope>
</reference>
<protein>
    <recommendedName>
        <fullName>Proliferating cell nuclear antigen</fullName>
        <shortName>PCNA</shortName>
    </recommendedName>
</protein>
<keyword id="KW-0235">DNA replication</keyword>
<keyword id="KW-0238">DNA-binding</keyword>
<keyword id="KW-1017">Isopeptide bond</keyword>
<keyword id="KW-0539">Nucleus</keyword>
<keyword id="KW-1185">Reference proteome</keyword>
<keyword id="KW-0832">Ubl conjugation</keyword>
<sequence length="262" mass="28916">MFEARLVQGSVLKRVLEALKDLITEACWDLGSGGISLQSMDSSHVSLVQLTLRSEGFDTYRCDRNIAMGVNLNSMSKILKCAGNEDIITLRAEDNADTLALVFETPNQEKVSDYEMKLMDLDVEQLGIPEQEYSCVVKMPSAEFARICRDLSHIGDAVVISCAKDGVKFSANGELGNGNIKLSQTSNVDKEEEAVTIEMNEPVQLTFALRYLNFFTKATPLSPTVTLSMSADVPLVVEYKIADMGHXKYYLAPKIEDQQEGS</sequence>
<accession>Q9DDF1</accession>
<evidence type="ECO:0000250" key="1"/>
<evidence type="ECO:0000250" key="2">
    <source>
        <dbReference type="UniProtKB" id="P12004"/>
    </source>
</evidence>
<evidence type="ECO:0000255" key="3"/>
<evidence type="ECO:0000305" key="4"/>
<dbReference type="EMBL" id="AJ301669">
    <property type="protein sequence ID" value="CAC17700.1"/>
    <property type="molecule type" value="mRNA"/>
</dbReference>
<dbReference type="RefSeq" id="NP_001310154.1">
    <property type="nucleotide sequence ID" value="NM_001323225.1"/>
</dbReference>
<dbReference type="GeneID" id="107323623"/>
<dbReference type="KEGG" id="cjo:107323623"/>
<dbReference type="CTD" id="5111"/>
<dbReference type="OrthoDB" id="534348at2759"/>
<dbReference type="Proteomes" id="UP000694412">
    <property type="component" value="Unplaced"/>
</dbReference>
<dbReference type="GO" id="GO:0043626">
    <property type="term" value="C:PCNA complex"/>
    <property type="evidence" value="ECO:0007669"/>
    <property type="project" value="TreeGrafter"/>
</dbReference>
<dbReference type="GO" id="GO:0070557">
    <property type="term" value="C:PCNA-p21 complex"/>
    <property type="evidence" value="ECO:0000250"/>
    <property type="project" value="UniProtKB"/>
</dbReference>
<dbReference type="GO" id="GO:0003677">
    <property type="term" value="F:DNA binding"/>
    <property type="evidence" value="ECO:0007669"/>
    <property type="project" value="UniProtKB-KW"/>
</dbReference>
<dbReference type="GO" id="GO:0030337">
    <property type="term" value="F:DNA polymerase processivity factor activity"/>
    <property type="evidence" value="ECO:0007669"/>
    <property type="project" value="InterPro"/>
</dbReference>
<dbReference type="GO" id="GO:0006272">
    <property type="term" value="P:leading strand elongation"/>
    <property type="evidence" value="ECO:0007669"/>
    <property type="project" value="TreeGrafter"/>
</dbReference>
<dbReference type="GO" id="GO:0006298">
    <property type="term" value="P:mismatch repair"/>
    <property type="evidence" value="ECO:0007669"/>
    <property type="project" value="TreeGrafter"/>
</dbReference>
<dbReference type="GO" id="GO:0006275">
    <property type="term" value="P:regulation of DNA replication"/>
    <property type="evidence" value="ECO:0007669"/>
    <property type="project" value="InterPro"/>
</dbReference>
<dbReference type="GO" id="GO:0019985">
    <property type="term" value="P:translesion synthesis"/>
    <property type="evidence" value="ECO:0000250"/>
    <property type="project" value="UniProtKB"/>
</dbReference>
<dbReference type="CDD" id="cd00577">
    <property type="entry name" value="PCNA"/>
    <property type="match status" value="1"/>
</dbReference>
<dbReference type="FunFam" id="3.70.10.10:FF:000001">
    <property type="entry name" value="Proliferating cell nuclear antigen"/>
    <property type="match status" value="1"/>
</dbReference>
<dbReference type="Gene3D" id="3.70.10.10">
    <property type="match status" value="1"/>
</dbReference>
<dbReference type="HAMAP" id="MF_00317">
    <property type="entry name" value="DNApol_clamp_arch"/>
    <property type="match status" value="1"/>
</dbReference>
<dbReference type="InterPro" id="IPR046938">
    <property type="entry name" value="DNA_clamp_sf"/>
</dbReference>
<dbReference type="InterPro" id="IPR000730">
    <property type="entry name" value="Pr_cel_nuc_antig"/>
</dbReference>
<dbReference type="InterPro" id="IPR022649">
    <property type="entry name" value="Pr_cel_nuc_antig_C"/>
</dbReference>
<dbReference type="InterPro" id="IPR022659">
    <property type="entry name" value="Pr_cel_nuc_antig_CS"/>
</dbReference>
<dbReference type="InterPro" id="IPR022648">
    <property type="entry name" value="Pr_cel_nuc_antig_N"/>
</dbReference>
<dbReference type="NCBIfam" id="TIGR00590">
    <property type="entry name" value="pcna"/>
    <property type="match status" value="1"/>
</dbReference>
<dbReference type="PANTHER" id="PTHR11352">
    <property type="entry name" value="PROLIFERATING CELL NUCLEAR ANTIGEN"/>
    <property type="match status" value="1"/>
</dbReference>
<dbReference type="PANTHER" id="PTHR11352:SF0">
    <property type="entry name" value="PROLIFERATING CELL NUCLEAR ANTIGEN"/>
    <property type="match status" value="1"/>
</dbReference>
<dbReference type="Pfam" id="PF02747">
    <property type="entry name" value="PCNA_C"/>
    <property type="match status" value="1"/>
</dbReference>
<dbReference type="Pfam" id="PF00705">
    <property type="entry name" value="PCNA_N"/>
    <property type="match status" value="1"/>
</dbReference>
<dbReference type="PRINTS" id="PR00339">
    <property type="entry name" value="PCNACYCLIN"/>
</dbReference>
<dbReference type="SUPFAM" id="SSF55979">
    <property type="entry name" value="DNA clamp"/>
    <property type="match status" value="2"/>
</dbReference>
<dbReference type="PROSITE" id="PS01251">
    <property type="entry name" value="PCNA_1"/>
    <property type="match status" value="1"/>
</dbReference>
<dbReference type="PROSITE" id="PS00293">
    <property type="entry name" value="PCNA_2"/>
    <property type="match status" value="1"/>
</dbReference>
<organism>
    <name type="scientific">Coturnix japonica</name>
    <name type="common">Japanese quail</name>
    <name type="synonym">Coturnix coturnix japonica</name>
    <dbReference type="NCBI Taxonomy" id="93934"/>
    <lineage>
        <taxon>Eukaryota</taxon>
        <taxon>Metazoa</taxon>
        <taxon>Chordata</taxon>
        <taxon>Craniata</taxon>
        <taxon>Vertebrata</taxon>
        <taxon>Euteleostomi</taxon>
        <taxon>Archelosauria</taxon>
        <taxon>Archosauria</taxon>
        <taxon>Dinosauria</taxon>
        <taxon>Saurischia</taxon>
        <taxon>Theropoda</taxon>
        <taxon>Coelurosauria</taxon>
        <taxon>Aves</taxon>
        <taxon>Neognathae</taxon>
        <taxon>Galloanserae</taxon>
        <taxon>Galliformes</taxon>
        <taxon>Phasianidae</taxon>
        <taxon>Perdicinae</taxon>
        <taxon>Coturnix</taxon>
    </lineage>
</organism>